<feature type="transit peptide" description="Mitochondrion" evidence="3">
    <location>
        <begin position="1"/>
        <end status="unknown"/>
    </location>
</feature>
<feature type="chain" id="PRO_0000300824" description="Pseudouridylate synthase RPUSD4, mitochondrial">
    <location>
        <begin status="unknown"/>
        <end position="377"/>
    </location>
</feature>
<feature type="region of interest" description="Disordered" evidence="4">
    <location>
        <begin position="51"/>
        <end position="70"/>
    </location>
</feature>
<feature type="active site" evidence="1">
    <location>
        <position position="153"/>
    </location>
</feature>
<feature type="sequence conflict" description="In Ref. 1; AAX46489/ABF57296." evidence="5" ref="1">
    <original>V</original>
    <variation>A</variation>
    <location>
        <position position="8"/>
    </location>
</feature>
<feature type="sequence conflict" description="In Ref. 1; AAX46489/AAX46608/ABG67083/AAX08790 and 2; AAI34591." evidence="5" ref="1 2">
    <original>Q</original>
    <variation>R</variation>
    <location>
        <position position="248"/>
    </location>
</feature>
<feature type="sequence conflict" description="In Ref. 1; AAX08790 and 2; AAI34591." evidence="5" ref="1 2">
    <original>Q</original>
    <variation>R</variation>
    <location>
        <position position="373"/>
    </location>
</feature>
<name>RUSD4_BOVIN</name>
<keyword id="KW-0963">Cytoplasm</keyword>
<keyword id="KW-0413">Isomerase</keyword>
<keyword id="KW-0496">Mitochondrion</keyword>
<keyword id="KW-0507">mRNA processing</keyword>
<keyword id="KW-0508">mRNA splicing</keyword>
<keyword id="KW-0539">Nucleus</keyword>
<keyword id="KW-1185">Reference proteome</keyword>
<keyword id="KW-0698">rRNA processing</keyword>
<keyword id="KW-0809">Transit peptide</keyword>
<keyword id="KW-0819">tRNA processing</keyword>
<accession>Q5E9Z1</accession>
<accession>A7YWI2</accession>
<accession>Q0V8H4</accession>
<accession>Q1JP71</accession>
<accession>Q1JPL3</accession>
<accession>Q58D36</accession>
<accession>Q58DF5</accession>
<accession>Q5E9Z6</accession>
<sequence>MVAPGCSVPGLWVRGFGQCLGSLFTLFSKPLCSAAAAASQPLDAQRLAERLRAQKQQQKTKEPAPTNPVQRRVRELVRFTEQLQRVHPNVLAKALSRGIVHQDKELVVINKPYGLPVHGGPGVKLCISDVLPVLAKILHGPKAKPLHLCHRLDKETTGVMVLAWEKEVAHQVQELFRTRQVTKKYWAITVRVPVPEAGVVDIPIVEKEAQGQQHHHKMTLSPSYRMDDGKMVRVRSSRNAQLAVTQYQVLSSSLSAALLELQPITGIKHQLRVHMSFGLDCPILGDHKYSDWNRLAPQKLSAGILKKLGLQQSKARHLPLHLHACQLTLPALQPQKEELTLLCRPPRYFVNSLRRLGLKMPSRDHSADEEAAQPGAQ</sequence>
<dbReference type="EC" id="5.4.99.-" evidence="2"/>
<dbReference type="EMBL" id="BT020717">
    <property type="protein sequence ID" value="AAX08734.1"/>
    <property type="molecule type" value="mRNA"/>
</dbReference>
<dbReference type="EMBL" id="BT020773">
    <property type="protein sequence ID" value="AAX08790.1"/>
    <property type="molecule type" value="mRNA"/>
</dbReference>
<dbReference type="EMBL" id="BT020778">
    <property type="protein sequence ID" value="AAX08795.1"/>
    <property type="molecule type" value="mRNA"/>
</dbReference>
<dbReference type="EMBL" id="BT021642">
    <property type="protein sequence ID" value="AAX46489.1"/>
    <property type="status" value="ALT_FRAME"/>
    <property type="molecule type" value="mRNA"/>
</dbReference>
<dbReference type="EMBL" id="BT021761">
    <property type="protein sequence ID" value="AAX46608.1"/>
    <property type="status" value="ALT_FRAME"/>
    <property type="molecule type" value="mRNA"/>
</dbReference>
<dbReference type="EMBL" id="BT025340">
    <property type="protein sequence ID" value="ABF57296.1"/>
    <property type="molecule type" value="mRNA"/>
</dbReference>
<dbReference type="EMBL" id="BT025483">
    <property type="protein sequence ID" value="ABF57439.1"/>
    <property type="molecule type" value="mRNA"/>
</dbReference>
<dbReference type="EMBL" id="BT026244">
    <property type="protein sequence ID" value="ABG67083.1"/>
    <property type="molecule type" value="mRNA"/>
</dbReference>
<dbReference type="EMBL" id="BC134590">
    <property type="protein sequence ID" value="AAI34591.1"/>
    <property type="molecule type" value="mRNA"/>
</dbReference>
<dbReference type="RefSeq" id="NP_001015616.1">
    <property type="nucleotide sequence ID" value="NM_001015616.1"/>
</dbReference>
<dbReference type="SMR" id="Q5E9Z1"/>
<dbReference type="FunCoup" id="Q5E9Z1">
    <property type="interactions" value="2024"/>
</dbReference>
<dbReference type="STRING" id="9913.ENSBTAP00000027843"/>
<dbReference type="PaxDb" id="9913-ENSBTAP00000027843"/>
<dbReference type="GeneID" id="516934"/>
<dbReference type="KEGG" id="bta:516934"/>
<dbReference type="CTD" id="84881"/>
<dbReference type="eggNOG" id="KOG1919">
    <property type="taxonomic scope" value="Eukaryota"/>
</dbReference>
<dbReference type="HOGENOM" id="CLU_016902_2_1_1"/>
<dbReference type="InParanoid" id="Q5E9Z1"/>
<dbReference type="OrthoDB" id="428658at2759"/>
<dbReference type="TreeFam" id="TF337899"/>
<dbReference type="Proteomes" id="UP000009136">
    <property type="component" value="Unplaced"/>
</dbReference>
<dbReference type="GO" id="GO:0005759">
    <property type="term" value="C:mitochondrial matrix"/>
    <property type="evidence" value="ECO:0007669"/>
    <property type="project" value="UniProtKB-SubCell"/>
</dbReference>
<dbReference type="GO" id="GO:0005634">
    <property type="term" value="C:nucleus"/>
    <property type="evidence" value="ECO:0007669"/>
    <property type="project" value="UniProtKB-SubCell"/>
</dbReference>
<dbReference type="GO" id="GO:0003723">
    <property type="term" value="F:RNA binding"/>
    <property type="evidence" value="ECO:0007669"/>
    <property type="project" value="InterPro"/>
</dbReference>
<dbReference type="GO" id="GO:0106029">
    <property type="term" value="F:tRNA pseudouridine synthase activity"/>
    <property type="evidence" value="ECO:0007669"/>
    <property type="project" value="RHEA"/>
</dbReference>
<dbReference type="GO" id="GO:0006397">
    <property type="term" value="P:mRNA processing"/>
    <property type="evidence" value="ECO:0007669"/>
    <property type="project" value="UniProtKB-KW"/>
</dbReference>
<dbReference type="GO" id="GO:0070131">
    <property type="term" value="P:positive regulation of mitochondrial translation"/>
    <property type="evidence" value="ECO:0000250"/>
    <property type="project" value="UniProtKB"/>
</dbReference>
<dbReference type="GO" id="GO:0001522">
    <property type="term" value="P:pseudouridine synthesis"/>
    <property type="evidence" value="ECO:0007669"/>
    <property type="project" value="InterPro"/>
</dbReference>
<dbReference type="GO" id="GO:0008380">
    <property type="term" value="P:RNA splicing"/>
    <property type="evidence" value="ECO:0007669"/>
    <property type="project" value="UniProtKB-KW"/>
</dbReference>
<dbReference type="GO" id="GO:0006364">
    <property type="term" value="P:rRNA processing"/>
    <property type="evidence" value="ECO:0007669"/>
    <property type="project" value="UniProtKB-KW"/>
</dbReference>
<dbReference type="GO" id="GO:0008033">
    <property type="term" value="P:tRNA processing"/>
    <property type="evidence" value="ECO:0007669"/>
    <property type="project" value="UniProtKB-KW"/>
</dbReference>
<dbReference type="CDD" id="cd02869">
    <property type="entry name" value="PseudoU_synth_RluA_like"/>
    <property type="match status" value="1"/>
</dbReference>
<dbReference type="FunFam" id="3.30.2350.10:FF:000015">
    <property type="entry name" value="Mitochondrial RNA pseudouridine synthase RPUSD4"/>
    <property type="match status" value="1"/>
</dbReference>
<dbReference type="Gene3D" id="3.30.2350.10">
    <property type="entry name" value="Pseudouridine synthase"/>
    <property type="match status" value="1"/>
</dbReference>
<dbReference type="InterPro" id="IPR020103">
    <property type="entry name" value="PsdUridine_synth_cat_dom_sf"/>
</dbReference>
<dbReference type="InterPro" id="IPR006224">
    <property type="entry name" value="PsdUridine_synth_RluA-like_CS"/>
</dbReference>
<dbReference type="InterPro" id="IPR006145">
    <property type="entry name" value="PsdUridine_synth_RsuA/RluA"/>
</dbReference>
<dbReference type="InterPro" id="IPR050188">
    <property type="entry name" value="RluA_PseudoU_synthase"/>
</dbReference>
<dbReference type="PANTHER" id="PTHR21600">
    <property type="entry name" value="MITOCHONDRIAL RNA PSEUDOURIDINE SYNTHASE"/>
    <property type="match status" value="1"/>
</dbReference>
<dbReference type="PANTHER" id="PTHR21600:SF83">
    <property type="entry name" value="PSEUDOURIDYLATE SYNTHASE RPUSD4, MITOCHONDRIAL"/>
    <property type="match status" value="1"/>
</dbReference>
<dbReference type="Pfam" id="PF00849">
    <property type="entry name" value="PseudoU_synth_2"/>
    <property type="match status" value="1"/>
</dbReference>
<dbReference type="SUPFAM" id="SSF55120">
    <property type="entry name" value="Pseudouridine synthase"/>
    <property type="match status" value="1"/>
</dbReference>
<dbReference type="PROSITE" id="PS01129">
    <property type="entry name" value="PSI_RLU"/>
    <property type="match status" value="1"/>
</dbReference>
<reference key="1">
    <citation type="journal article" date="2005" name="BMC Genomics">
        <title>Characterization of 954 bovine full-CDS cDNA sequences.</title>
        <authorList>
            <person name="Harhay G.P."/>
            <person name="Sonstegard T.S."/>
            <person name="Keele J.W."/>
            <person name="Heaton M.P."/>
            <person name="Clawson M.L."/>
            <person name="Snelling W.M."/>
            <person name="Wiedmann R.T."/>
            <person name="Van Tassell C.P."/>
            <person name="Smith T.P.L."/>
        </authorList>
    </citation>
    <scope>NUCLEOTIDE SEQUENCE [LARGE SCALE MRNA]</scope>
</reference>
<reference key="2">
    <citation type="submission" date="2007-03" db="EMBL/GenBank/DDBJ databases">
        <authorList>
            <consortium name="NIH - Mammalian Gene Collection (MGC) project"/>
        </authorList>
    </citation>
    <scope>NUCLEOTIDE SEQUENCE [LARGE SCALE MRNA]</scope>
    <source>
        <strain>Crossbred X Angus</strain>
        <tissue>Liver</tissue>
    </source>
</reference>
<gene>
    <name evidence="2" type="primary">RPUSD4</name>
</gene>
<protein>
    <recommendedName>
        <fullName evidence="5">Pseudouridylate synthase RPUSD4, mitochondrial</fullName>
        <ecNumber evidence="2">5.4.99.-</ecNumber>
    </recommendedName>
    <alternativeName>
        <fullName evidence="5">RNA pseudouridylate synthase domain-containing protein 4</fullName>
    </alternativeName>
</protein>
<proteinExistence type="evidence at transcript level"/>
<evidence type="ECO:0000250" key="1">
    <source>
        <dbReference type="UniProtKB" id="P0AA39"/>
    </source>
</evidence>
<evidence type="ECO:0000250" key="2">
    <source>
        <dbReference type="UniProtKB" id="Q96CM3"/>
    </source>
</evidence>
<evidence type="ECO:0000255" key="3"/>
<evidence type="ECO:0000256" key="4">
    <source>
        <dbReference type="SAM" id="MobiDB-lite"/>
    </source>
</evidence>
<evidence type="ECO:0000305" key="5"/>
<comment type="function">
    <text evidence="2">Catalyzes uridine to pseudouridine isomerization (pseudouridylation) of different mitochondrial RNA substrates. Acts on position 1397 in 16S mitochondrial ribosomal RNA (16S mt-rRNA). This modification is required for the assembly of 16S mt-rRNA into a functional mitochondrial ribosome. As a component of a functional protein-RNA module, consisting of RCC1L, NGRN, RPUSD3, RPUSD4, TRUB2, FASTKD2 and 16S mt-rRNA, controls 16S mt-rRNA abundance and is required for intra-mitochondrial translation. Acts on position 39 in mitochondrial tRNA(Phe). Also catalyzes pseudouridylation of mRNAs in nucleus: acts as a regulator of pre-mRNA splicing by mediating pseudouridylation of pre-mRNAs at locations associated with alternatively spliced regions. Pseudouridylation of pre-mRNAs near splice sites directly regulates mRNA splicing and mRNA 3'-end processing.</text>
</comment>
<comment type="catalytic activity">
    <reaction evidence="2">
        <text>uridine in 5S rRNA = pseudouridine in 5S rRNA</text>
        <dbReference type="Rhea" id="RHEA:47036"/>
        <dbReference type="Rhea" id="RHEA-COMP:11730"/>
        <dbReference type="Rhea" id="RHEA-COMP:11731"/>
        <dbReference type="ChEBI" id="CHEBI:65314"/>
        <dbReference type="ChEBI" id="CHEBI:65315"/>
    </reaction>
</comment>
<comment type="catalytic activity">
    <reaction evidence="2">
        <text>a uridine in tRNA = a pseudouridine in tRNA</text>
        <dbReference type="Rhea" id="RHEA:54572"/>
        <dbReference type="Rhea" id="RHEA-COMP:13339"/>
        <dbReference type="Rhea" id="RHEA-COMP:13934"/>
        <dbReference type="ChEBI" id="CHEBI:65314"/>
        <dbReference type="ChEBI" id="CHEBI:65315"/>
    </reaction>
</comment>
<comment type="catalytic activity">
    <reaction evidence="2">
        <text>a uridine in mRNA = a pseudouridine in mRNA</text>
        <dbReference type="Rhea" id="RHEA:56644"/>
        <dbReference type="Rhea" id="RHEA-COMP:14658"/>
        <dbReference type="Rhea" id="RHEA-COMP:14659"/>
        <dbReference type="ChEBI" id="CHEBI:65314"/>
        <dbReference type="ChEBI" id="CHEBI:65315"/>
    </reaction>
</comment>
<comment type="subunit">
    <text evidence="2">Interacts with 16S mt-rRNA, mt-tRNA(Phe) and mt-tRNA(Met). Forms a regulatory protein-RNA complex, consisting of RCC1L, NGRN, RPUSD3, RPUSD4, TRUB2, FASTKD2 and 16S mt-rRNA.</text>
</comment>
<comment type="subcellular location">
    <subcellularLocation>
        <location evidence="2">Mitochondrion matrix</location>
    </subcellularLocation>
    <subcellularLocation>
        <location evidence="2">Nucleus</location>
    </subcellularLocation>
    <subcellularLocation>
        <location evidence="2">Cytoplasm</location>
    </subcellularLocation>
    <text evidence="2">Mainly localizes to mitochondrion. Localizes to mitochondrial RNA granules, platforms for post-transcriptional RNA modification and ribosome assembly. Also found in nucleus and cytoplasm.</text>
</comment>
<comment type="similarity">
    <text evidence="5">Belongs to the pseudouridine synthase RluA family.</text>
</comment>
<comment type="sequence caution" evidence="5">
    <conflict type="frameshift">
        <sequence resource="EMBL-CDS" id="AAX46489"/>
    </conflict>
</comment>
<comment type="sequence caution" evidence="5">
    <conflict type="frameshift">
        <sequence resource="EMBL-CDS" id="AAX46608"/>
    </conflict>
</comment>
<organism>
    <name type="scientific">Bos taurus</name>
    <name type="common">Bovine</name>
    <dbReference type="NCBI Taxonomy" id="9913"/>
    <lineage>
        <taxon>Eukaryota</taxon>
        <taxon>Metazoa</taxon>
        <taxon>Chordata</taxon>
        <taxon>Craniata</taxon>
        <taxon>Vertebrata</taxon>
        <taxon>Euteleostomi</taxon>
        <taxon>Mammalia</taxon>
        <taxon>Eutheria</taxon>
        <taxon>Laurasiatheria</taxon>
        <taxon>Artiodactyla</taxon>
        <taxon>Ruminantia</taxon>
        <taxon>Pecora</taxon>
        <taxon>Bovidae</taxon>
        <taxon>Bovinae</taxon>
        <taxon>Bos</taxon>
    </lineage>
</organism>